<protein>
    <recommendedName>
        <fullName>Spondin-1</fullName>
    </recommendedName>
    <alternativeName>
        <fullName>F-spondin</fullName>
    </alternativeName>
</protein>
<dbReference type="EMBL" id="L09123">
    <property type="protein sequence ID" value="AAA19105.1"/>
    <property type="molecule type" value="mRNA"/>
</dbReference>
<dbReference type="PIR" id="A47723">
    <property type="entry name" value="A47723"/>
</dbReference>
<dbReference type="SMR" id="P35447"/>
<dbReference type="GlyCosmos" id="P35447">
    <property type="glycosylation" value="2 sites, No reported glycans"/>
</dbReference>
<dbReference type="AGR" id="Xenbase:XB-GENE-991011"/>
<dbReference type="Xenbase" id="XB-GENE-991011">
    <property type="gene designation" value="spon1.S"/>
</dbReference>
<dbReference type="Proteomes" id="UP000186698">
    <property type="component" value="Unplaced"/>
</dbReference>
<dbReference type="GO" id="GO:0031012">
    <property type="term" value="C:extracellular matrix"/>
    <property type="evidence" value="ECO:0000318"/>
    <property type="project" value="GO_Central"/>
</dbReference>
<dbReference type="GO" id="GO:0005576">
    <property type="term" value="C:extracellular region"/>
    <property type="evidence" value="ECO:0007669"/>
    <property type="project" value="UniProtKB-KW"/>
</dbReference>
<dbReference type="GO" id="GO:0046872">
    <property type="term" value="F:metal ion binding"/>
    <property type="evidence" value="ECO:0007669"/>
    <property type="project" value="UniProtKB-KW"/>
</dbReference>
<dbReference type="GO" id="GO:0007155">
    <property type="term" value="P:cell adhesion"/>
    <property type="evidence" value="ECO:0000318"/>
    <property type="project" value="GO_Central"/>
</dbReference>
<dbReference type="CDD" id="cd08544">
    <property type="entry name" value="Reeler"/>
    <property type="match status" value="1"/>
</dbReference>
<dbReference type="FunFam" id="2.20.100.10:FF:000026">
    <property type="entry name" value="Spondin 1"/>
    <property type="match status" value="1"/>
</dbReference>
<dbReference type="FunFam" id="2.20.100.10:FF:000013">
    <property type="entry name" value="Spondin 1a"/>
    <property type="match status" value="1"/>
</dbReference>
<dbReference type="FunFam" id="2.60.40.2130:FF:000001">
    <property type="entry name" value="Spondin 1a"/>
    <property type="match status" value="1"/>
</dbReference>
<dbReference type="FunFam" id="2.20.100.10:FF:000034">
    <property type="entry name" value="Spondin-1"/>
    <property type="match status" value="1"/>
</dbReference>
<dbReference type="FunFam" id="2.60.40.4060:FF:000002">
    <property type="entry name" value="Spondin-1"/>
    <property type="match status" value="1"/>
</dbReference>
<dbReference type="Gene3D" id="2.60.40.2130">
    <property type="entry name" value="F-spondin domain"/>
    <property type="match status" value="1"/>
</dbReference>
<dbReference type="Gene3D" id="2.60.40.4060">
    <property type="entry name" value="Reeler domain"/>
    <property type="match status" value="1"/>
</dbReference>
<dbReference type="Gene3D" id="2.20.100.10">
    <property type="entry name" value="Thrombospondin type-1 (TSP1) repeat"/>
    <property type="match status" value="6"/>
</dbReference>
<dbReference type="InterPro" id="IPR002861">
    <property type="entry name" value="Reeler_dom"/>
</dbReference>
<dbReference type="InterPro" id="IPR042307">
    <property type="entry name" value="Reeler_sf"/>
</dbReference>
<dbReference type="InterPro" id="IPR051418">
    <property type="entry name" value="Spondin/Thrombospondin_T1"/>
</dbReference>
<dbReference type="InterPro" id="IPR009465">
    <property type="entry name" value="Spondin_N"/>
</dbReference>
<dbReference type="InterPro" id="IPR038678">
    <property type="entry name" value="Spondin_N_sf"/>
</dbReference>
<dbReference type="InterPro" id="IPR000884">
    <property type="entry name" value="TSP1_rpt"/>
</dbReference>
<dbReference type="InterPro" id="IPR036383">
    <property type="entry name" value="TSP1_rpt_sf"/>
</dbReference>
<dbReference type="InterPro" id="IPR044004">
    <property type="entry name" value="TSP1_spondin_dom"/>
</dbReference>
<dbReference type="NCBIfam" id="NF038123">
    <property type="entry name" value="NF038123_dom"/>
    <property type="match status" value="1"/>
</dbReference>
<dbReference type="PANTHER" id="PTHR11311">
    <property type="entry name" value="SPONDIN"/>
    <property type="match status" value="1"/>
</dbReference>
<dbReference type="PANTHER" id="PTHR11311:SF16">
    <property type="entry name" value="SPONDIN-1"/>
    <property type="match status" value="1"/>
</dbReference>
<dbReference type="Pfam" id="PF02014">
    <property type="entry name" value="Reeler"/>
    <property type="match status" value="1"/>
</dbReference>
<dbReference type="Pfam" id="PF06468">
    <property type="entry name" value="Spond_N"/>
    <property type="match status" value="1"/>
</dbReference>
<dbReference type="Pfam" id="PF19028">
    <property type="entry name" value="TSP1_spondin"/>
    <property type="match status" value="1"/>
</dbReference>
<dbReference type="Pfam" id="PF00090">
    <property type="entry name" value="TSP_1"/>
    <property type="match status" value="5"/>
</dbReference>
<dbReference type="SMART" id="SM00209">
    <property type="entry name" value="TSP1"/>
    <property type="match status" value="6"/>
</dbReference>
<dbReference type="SUPFAM" id="SSF82895">
    <property type="entry name" value="TSP-1 type 1 repeat"/>
    <property type="match status" value="6"/>
</dbReference>
<dbReference type="PROSITE" id="PS51019">
    <property type="entry name" value="REELIN"/>
    <property type="match status" value="1"/>
</dbReference>
<dbReference type="PROSITE" id="PS51020">
    <property type="entry name" value="SPONDIN"/>
    <property type="match status" value="1"/>
</dbReference>
<dbReference type="PROSITE" id="PS50092">
    <property type="entry name" value="TSP1"/>
    <property type="match status" value="6"/>
</dbReference>
<proteinExistence type="evidence at transcript level"/>
<reference key="1">
    <citation type="journal article" date="1993" name="Proc. Natl. Acad. Sci. U.S.A.">
        <title>Ectopic neural expression of a floor plate marker in frog embryos injected with the midline transcription factor Pintallavis.</title>
        <authorList>
            <person name="Ruiz i Altaba A."/>
            <person name="Cox C."/>
            <person name="Jessell T.M."/>
            <person name="Klar A."/>
        </authorList>
    </citation>
    <scope>NUCLEOTIDE SEQUENCE [MRNA]</scope>
    <source>
        <tissue>Embryo</tissue>
    </source>
</reference>
<comment type="function">
    <text>Promotes the attachment of spinal cord and sensory neuron cells and the outgrowth of neurites in vitro. May contribute to the growth and guidance of axons in both the spinal cord and the PNS.</text>
</comment>
<comment type="subcellular location">
    <subcellularLocation>
        <location evidence="1">Secreted</location>
        <location evidence="1">Extracellular space</location>
        <location evidence="1">Extracellular matrix</location>
    </subcellularLocation>
</comment>
<comment type="tissue specificity">
    <text>Expressed at high levels in the floor plate.</text>
</comment>
<feature type="signal peptide" evidence="3">
    <location>
        <begin position="1"/>
        <end position="23"/>
    </location>
</feature>
<feature type="chain" id="PRO_0000035869" description="Spondin-1">
    <location>
        <begin position="24"/>
        <end position="803"/>
    </location>
</feature>
<feature type="domain" description="Reelin" evidence="5">
    <location>
        <begin position="24"/>
        <end position="190"/>
    </location>
</feature>
<feature type="domain" description="Spondin" evidence="6">
    <location>
        <begin position="191"/>
        <end position="383"/>
    </location>
</feature>
<feature type="domain" description="TSP type-1 1" evidence="4">
    <location>
        <begin position="436"/>
        <end position="489"/>
    </location>
</feature>
<feature type="domain" description="TSP type-1 2" evidence="4">
    <location>
        <begin position="495"/>
        <end position="549"/>
    </location>
</feature>
<feature type="domain" description="TSP type-1 3" evidence="4">
    <location>
        <begin position="552"/>
        <end position="605"/>
    </location>
</feature>
<feature type="domain" description="TSP type-1 4" evidence="4">
    <location>
        <begin position="608"/>
        <end position="662"/>
    </location>
</feature>
<feature type="domain" description="TSP type-1 5" evidence="4">
    <location>
        <begin position="664"/>
        <end position="717"/>
    </location>
</feature>
<feature type="domain" description="TSP type-1 6" evidence="4">
    <location>
        <begin position="750"/>
        <end position="802"/>
    </location>
</feature>
<feature type="region of interest" description="Disordered" evidence="7">
    <location>
        <begin position="353"/>
        <end position="389"/>
    </location>
</feature>
<feature type="region of interest" description="Disordered" evidence="7">
    <location>
        <begin position="722"/>
        <end position="741"/>
    </location>
</feature>
<feature type="compositionally biased region" description="Polar residues" evidence="7">
    <location>
        <begin position="354"/>
        <end position="365"/>
    </location>
</feature>
<feature type="binding site" evidence="2">
    <location>
        <position position="320"/>
    </location>
    <ligand>
        <name>Ca(2+)</name>
        <dbReference type="ChEBI" id="CHEBI:29108"/>
    </ligand>
</feature>
<feature type="binding site" evidence="2">
    <location>
        <position position="349"/>
    </location>
    <ligand>
        <name>Ca(2+)</name>
        <dbReference type="ChEBI" id="CHEBI:29108"/>
    </ligand>
</feature>
<feature type="binding site" evidence="2">
    <location>
        <position position="353"/>
    </location>
    <ligand>
        <name>Ca(2+)</name>
        <dbReference type="ChEBI" id="CHEBI:29108"/>
    </ligand>
</feature>
<feature type="glycosylation site" description="N-linked (GlcNAc...) asparagine" evidence="3">
    <location>
        <position position="210"/>
    </location>
</feature>
<feature type="glycosylation site" description="N-linked (GlcNAc...) asparagine" evidence="3">
    <location>
        <position position="677"/>
    </location>
</feature>
<feature type="disulfide bond" evidence="4">
    <location>
        <begin position="39"/>
        <end position="124"/>
    </location>
</feature>
<feature type="disulfide bond" evidence="4">
    <location>
        <begin position="152"/>
        <end position="178"/>
    </location>
</feature>
<feature type="disulfide bond" evidence="2">
    <location>
        <begin position="195"/>
        <end position="331"/>
    </location>
</feature>
<feature type="disulfide bond" evidence="2">
    <location>
        <begin position="196"/>
        <end position="335"/>
    </location>
</feature>
<feature type="disulfide bond" evidence="2">
    <location>
        <begin position="198"/>
        <end position="409"/>
    </location>
</feature>
<feature type="disulfide bond" evidence="4">
    <location>
        <begin position="437"/>
        <end position="474"/>
    </location>
</feature>
<feature type="disulfide bond" evidence="4">
    <location>
        <begin position="448"/>
        <end position="483"/>
    </location>
</feature>
<feature type="disulfide bond" evidence="4">
    <location>
        <begin position="453"/>
        <end position="488"/>
    </location>
</feature>
<feature type="disulfide bond" evidence="4">
    <location>
        <begin position="496"/>
        <end position="532"/>
    </location>
</feature>
<feature type="disulfide bond" evidence="4">
    <location>
        <begin position="507"/>
        <end position="511"/>
    </location>
</feature>
<feature type="disulfide bond" evidence="4">
    <location>
        <begin position="542"/>
        <end position="548"/>
    </location>
</feature>
<feature type="disulfide bond" evidence="4">
    <location>
        <begin position="553"/>
        <end position="589"/>
    </location>
</feature>
<feature type="disulfide bond" evidence="4">
    <location>
        <begin position="564"/>
        <end position="568"/>
    </location>
</feature>
<feature type="disulfide bond" evidence="4">
    <location>
        <begin position="599"/>
        <end position="604"/>
    </location>
</feature>
<keyword id="KW-0130">Cell adhesion</keyword>
<keyword id="KW-1015">Disulfide bond</keyword>
<keyword id="KW-0272">Extracellular matrix</keyword>
<keyword id="KW-0325">Glycoprotein</keyword>
<keyword id="KW-0479">Metal-binding</keyword>
<keyword id="KW-1185">Reference proteome</keyword>
<keyword id="KW-0677">Repeat</keyword>
<keyword id="KW-0964">Secreted</keyword>
<keyword id="KW-0732">Signal</keyword>
<organism>
    <name type="scientific">Xenopus laevis</name>
    <name type="common">African clawed frog</name>
    <dbReference type="NCBI Taxonomy" id="8355"/>
    <lineage>
        <taxon>Eukaryota</taxon>
        <taxon>Metazoa</taxon>
        <taxon>Chordata</taxon>
        <taxon>Craniata</taxon>
        <taxon>Vertebrata</taxon>
        <taxon>Euteleostomi</taxon>
        <taxon>Amphibia</taxon>
        <taxon>Batrachia</taxon>
        <taxon>Anura</taxon>
        <taxon>Pipoidea</taxon>
        <taxon>Pipidae</taxon>
        <taxon>Xenopodinae</taxon>
        <taxon>Xenopus</taxon>
        <taxon>Xenopus</taxon>
    </lineage>
</organism>
<evidence type="ECO:0000250" key="1"/>
<evidence type="ECO:0000250" key="2">
    <source>
        <dbReference type="UniProtKB" id="Q9HCB6"/>
    </source>
</evidence>
<evidence type="ECO:0000255" key="3"/>
<evidence type="ECO:0000255" key="4">
    <source>
        <dbReference type="PROSITE-ProRule" id="PRU00210"/>
    </source>
</evidence>
<evidence type="ECO:0000255" key="5">
    <source>
        <dbReference type="PROSITE-ProRule" id="PRU00363"/>
    </source>
</evidence>
<evidence type="ECO:0000255" key="6">
    <source>
        <dbReference type="PROSITE-ProRule" id="PRU00364"/>
    </source>
</evidence>
<evidence type="ECO:0000256" key="7">
    <source>
        <dbReference type="SAM" id="MobiDB-lite"/>
    </source>
</evidence>
<gene>
    <name type="primary">spon1</name>
</gene>
<accession>P35447</accession>
<name>SPON1_XENLA</name>
<sequence length="803" mass="90703">MGLIFQPLFWQYVATSYALMVLGFLDETVEKAIKSEGYCSRILRAQGGTRKEGYNEFSMRVEGDPEFYKPGNTYRVTILAVSPAYFRGFTLIALKEGKEGEKEEDHAGSFQIIDEEDTQFMSNCPVAVTESTPRRRTRIQVFWTAPSIGTGCVILKASIVQKKIIYFQDEGSLTKRMCELDLTLEGGNEKTIPDCCACGTAKYRLTFYGNWSEKAHPKDYPRRANHWSAIIGGSHSGEYVLWEYGQASDGVKQVAELGSPVKMEEEIRQKGDEVLTVIKAKAQWPAWQPLNVRAAPSAEFSVDRSRHLMSFLAMMGPSPDWNVGLTSEDLCTKECGWVQKVVQDLIPWDAGTDSGVTYESPNKPTIPQDKIRPLTSLDHPQSPSMTRGGPIIPIARVVIERIARKGEQCNIIPDNVDDIVADLVTEEKDEDDTPETCIYSNWSPWSACSSATCDKGKRMRQRMLKAQLDLSVPCPDTQDFEPCMGPGCSDDEASTCMMSEWITWSPCSASCGMGIEVRERYVKQFPEDGSLCKVPTEETEKCIVNEECEPSSCIVTEWAEWEECSATCRMGMKKRHRMIKMTPADGSMCKADTTEVEKCMMPECHTIPCVLSPWSEWSDCSVTCGKGTRTRQRMLKSPSELGDCNEELELKQVEKCMLPECPISCELTEWSYWSECNKSCGKGHMIRTRMITMEPQFGGAVCPETVQRKKCRLRKCQKSSGNERRHLKDAREKRRSEKIKEDSDGEQYPVCKMKPWTAWTECTKFCGGGIQERFMTVKKRFKSSQFTSCKDKKEIRACNVHPC</sequence>